<comment type="function">
    <molecule>Sterol regulatory element-binding protein 1</molecule>
    <text evidence="3 15">Precursor of the transcription factor form (Processed sterol regulatory element-binding protein 1), which is embedded in the endoplasmic reticulum membrane (PubMed:32322062). Low sterol concentrations promote processing of this form, releasing the transcription factor form that translocates into the nucleus and activates transcription of genes involved in cholesterol biosynthesis and lipid homeostasis (By similarity).</text>
</comment>
<comment type="function">
    <molecule>Processed sterol regulatory element-binding protein 1</molecule>
    <text evidence="3 8 15 20">Key transcription factor that regulates expression of genes involved in cholesterol biosynthesis and lipid homeostasis (PubMed:12177166, PubMed:32322062, PubMed:8402897). Binds to the sterol regulatory element 1 (SRE-1) (5'-ATCACCCCAC-3'). Has dual sequence specificity binding to both an E-box motif (5'-ATCACGTGA-3') and to SRE-1 (5'-ATCACCCCAC-3') (PubMed:12177166, PubMed:8402897). Regulates the promoters of genes involved in cholesterol biosynthesis and the LDL receptor (LDLR) pathway of sterol regulation (PubMed:12177166, PubMed:32322062, PubMed:8402897).</text>
</comment>
<comment type="function">
    <molecule>Isoform SREBP-1A</molecule>
    <text evidence="3 8 16">Isoform expressed only in select tissues, which has higher transcriptional activity compared to SREBP-1C (By similarity). Able to stimulate both lipogenic and cholesterogenic gene expression (PubMed:12177166, PubMed:32497488). Has a role in the nutritional regulation of fatty acids and triglycerides in lipogenic organs such as the liver (By similarity). Required for innate immune response in macrophages by regulating lipid metabolism (By similarity).</text>
</comment>
<comment type="function">
    <molecule>Isoform SREBP-1C</molecule>
    <text evidence="3 8">Predominant isoform expressed in most tissues, which has weaker transcriptional activity compared to isoform SREBP-1A (By similarity). Primarily controls expression of lipogenic gene (PubMed:12177166). Strongly activates global lipid synthesis in rapidly growing cells (By similarity).</text>
</comment>
<comment type="function">
    <molecule>Isoform SREBP-1aDelta</molecule>
    <text evidence="28">The absence of Golgi proteolytic processing requirement makes this isoform constitutively active in transactivation of lipogenic gene promoters.</text>
</comment>
<comment type="function">
    <molecule>Isoform SREBP-1cDelta</molecule>
    <text evidence="28">The absence of Golgi proteolytic processing requirement makes this isoform constitutively active in transactivation of lipogenic gene promoters.</text>
</comment>
<comment type="activity regulation">
    <text evidence="3">Activation by cleavage is down-regulated upon activation of SIRT3-dependent PRKAA1/AMPK-alpha signaling cascade which leads to inhibition of ATP-consuming lipogenesis to restore cellular energy balance.</text>
</comment>
<comment type="subunit">
    <molecule>Sterol regulatory element-binding protein 1</molecule>
    <text evidence="12 15">Forms a tight complex with SCAP, the SCAP-SREBP complex, in the endoplasmic reticulum membrane and the Golgi apparatus (PubMed:32322062). Interacts with PAQR3; the interaction anchors the SCAP-SREBP complex to the Golgi apparatus in low cholesterol conditions (PubMed:26311497).</text>
</comment>
<comment type="subunit">
    <molecule>Processed sterol regulatory element-binding protein 1</molecule>
    <text evidence="3 20">Efficient DNA binding of the soluble transcription factor fragment requires dimerization with another bHLH protein (PubMed:8402897). Interacts with CEBPA, the interaction produces a transcriptional synergy (By similarity). Interacts with LMNA (By similarity).</text>
</comment>
<comment type="interaction">
    <interactant intactId="EBI-948313">
        <id>P36956</id>
    </interactant>
    <interactant intactId="EBI-930964">
        <id>P54253</id>
        <label>ATXN1</label>
    </interactant>
    <organismsDiffer>false</organismsDiffer>
    <experiments>5</experiments>
</comment>
<comment type="interaction">
    <interactant intactId="EBI-948313">
        <id>P36956</id>
    </interactant>
    <interactant intactId="EBI-466029">
        <id>P42858</id>
        <label>HTT</label>
    </interactant>
    <organismsDiffer>false</organismsDiffer>
    <experiments>3</experiments>
</comment>
<comment type="interaction">
    <interactant intactId="EBI-948328">
        <id>P36956-1</id>
    </interactant>
    <interactant intactId="EBI-81215">
        <id>Q92793</id>
        <label>CREBBP</label>
    </interactant>
    <organismsDiffer>false</organismsDiffer>
    <experiments>3</experiments>
</comment>
<comment type="interaction">
    <interactant intactId="EBI-948328">
        <id>P36956-1</id>
    </interactant>
    <interactant intactId="EBI-394506">
        <id>Q96RN5</id>
        <label>MED15</label>
    </interactant>
    <organismsDiffer>false</organismsDiffer>
    <experiments>7</experiments>
</comment>
<comment type="interaction">
    <interactant intactId="EBI-948328">
        <id>P36956-1</id>
    </interactant>
    <interactant intactId="EBI-7305">
        <id>P19659</id>
        <label>GAL11</label>
    </interactant>
    <organismsDiffer>true</organismsDiffer>
    <experiments>3</experiments>
</comment>
<comment type="interaction">
    <interactant intactId="EBI-948338">
        <id>P36956-3</id>
    </interactant>
    <interactant intactId="EBI-81215">
        <id>Q92793</id>
        <label>CREBBP</label>
    </interactant>
    <organismsDiffer>false</organismsDiffer>
    <experiments>2</experiments>
</comment>
<comment type="interaction">
    <interactant intactId="EBI-948338">
        <id>P36956-3</id>
    </interactant>
    <interactant intactId="EBI-394506">
        <id>Q96RN5</id>
        <label>MED15</label>
    </interactant>
    <organismsDiffer>false</organismsDiffer>
    <experiments>2</experiments>
</comment>
<comment type="interaction">
    <interactant intactId="EBI-948338">
        <id>P36956-3</id>
    </interactant>
    <interactant intactId="EBI-1802965">
        <id>Q96EB6</id>
        <label>SIRT1</label>
    </interactant>
    <organismsDiffer>false</organismsDiffer>
    <experiments>2</experiments>
</comment>
<comment type="interaction">
    <interactant intactId="EBI-22057616">
        <id>PRO_0000314029</id>
    </interactant>
    <interactant intactId="EBI-351949">
        <id>P02545-1</id>
        <label>LMNA</label>
    </interactant>
    <organismsDiffer>false</organismsDiffer>
    <experiments>6</experiments>
</comment>
<comment type="subcellular location">
    <molecule>Sterol regulatory element-binding protein 1</molecule>
    <subcellularLocation>
        <location evidence="9">Endoplasmic reticulum membrane</location>
        <topology evidence="4">Multi-pass membrane protein</topology>
    </subcellularLocation>
    <subcellularLocation>
        <location evidence="27">Golgi apparatus membrane</location>
        <topology evidence="4">Multi-pass membrane protein</topology>
    </subcellularLocation>
    <subcellularLocation>
        <location evidence="3">Cytoplasmic vesicle</location>
        <location evidence="3">COPII-coated vesicle membrane</location>
        <topology evidence="4">Multi-pass membrane protein</topology>
    </subcellularLocation>
    <text evidence="3">At high sterol concentrations, the SCAP-SREBP is retained in the endoplasmic reticulum. Low sterol concentrations promote recruitment into COPII-coated vesicles and transport of the SCAP-SREBP to the Golgi, where it is processed.</text>
</comment>
<comment type="subcellular location">
    <molecule>Processed sterol regulatory element-binding protein 1</molecule>
    <subcellularLocation>
        <location evidence="7 15">Nucleus</location>
    </subcellularLocation>
</comment>
<comment type="subcellular location">
    <molecule>Isoform SREBP-1aDelta</molecule>
    <subcellularLocation>
        <location evidence="11 16">Nucleus</location>
    </subcellularLocation>
</comment>
<comment type="subcellular location">
    <molecule>Isoform SREBP-1cDelta</molecule>
    <subcellularLocation>
        <location evidence="11 16">Nucleus</location>
    </subcellularLocation>
</comment>
<comment type="alternative products">
    <event type="alternative splicing"/>
    <isoform>
        <id>P36956-1</id>
        <name>SREBP-1A</name>
        <sequence type="displayed"/>
    </isoform>
    <isoform>
        <id>P36956-2</id>
        <name>SREBP-1B</name>
        <sequence type="described" ref="VSP_002150"/>
    </isoform>
    <isoform>
        <id>P36956-3</id>
        <name>SREBP-1C</name>
        <sequence type="described" ref="VSP_002149 VSP_002150"/>
    </isoform>
    <isoform>
        <id>P36956-4</id>
        <name>4</name>
        <sequence type="described" ref="VSP_030859"/>
    </isoform>
    <isoform>
        <id>P36956-5</id>
        <name>SREBP-1aDelta</name>
        <sequence type="described" ref="VSP_047598 VSP_047599"/>
    </isoform>
    <isoform>
        <id>P36956-6</id>
        <name>SREBP-1cDelta</name>
        <sequence type="described" ref="VSP_002149 VSP_047598 VSP_047599"/>
    </isoform>
    <text>Additional isoforms seem to exist.</text>
</comment>
<comment type="tissue specificity">
    <text evidence="20">Expressed in a wide variety of tissues, most abundant in liver and adrenal gland (PubMed:8402897). In fetal tissues lung and liver shows highest expression (PubMed:8402897).</text>
</comment>
<comment type="tissue specificity">
    <molecule>Isoform SREBP-1A</molecule>
    <text evidence="20">Predominates in hepatoma cell lines (PubMed:8402897). Also expressed in kidney, brain, white fat, and muscle (PubMed:8402897).</text>
</comment>
<comment type="tissue specificity">
    <molecule>Isoform SREBP-1C</molecule>
    <text evidence="20">Predominantly expressed in liver and adipose tissues (PubMed:8402897). Also expressed in kidney, brain, white fat, and muscle (PubMed:8402897).</text>
</comment>
<comment type="domain">
    <text evidence="13">The 9aaTAD motif is a transactivation domain present in a large number of yeast and animal transcription factors.</text>
</comment>
<comment type="PTM">
    <molecule>Sterol regulatory element-binding protein 1</molecule>
    <text evidence="15 21">Processed in the Golgi apparatus, releasing the protein from the membrane (PubMed:32322062, PubMed:8626610). At low cholesterol the SCAP-SREBP complex is recruited into COPII vesicles for export from the endoplasmic reticulum (PubMed:32322062, PubMed:8626610). In the Golgi, complex SREBPs are cleaved sequentially by site-1 (MBTPS1, S1P) and site-2 (MBTPS2, S2P) protease (PubMed:32322062, PubMed:8626610). The first cleavage by site-1 protease occurs within the luminal loop, the second cleavage by site-2 protease occurs within the first transmembrane domain, releasing the transcription factor from the Golgi membrane (PubMed:32322062).</text>
</comment>
<comment type="PTM">
    <text evidence="3">Phosphorylated by AMPK, leading to suppress protein processing and nuclear translocation, and repress target gene expression (By similarity). Phosphorylation at Ser-402 by SIK1 represses activity possibly by inhibiting DNA-binding (By similarity).</text>
</comment>
<comment type="PTM">
    <molecule>Sterol regulatory element-binding protein 1</molecule>
    <text evidence="18">SCAP-free SREBF1 is ubiquitinated by the BCR(ARMC5) complex, leading to its degradation.</text>
</comment>
<comment type="PTM">
    <molecule>Processed sterol regulatory element-binding protein 1</molecule>
    <text evidence="7">Ubiquitinated; the nuclear form has a rapid turnover and is rapidly ubiquitinated and degraded by the proteasome in the nucleus.</text>
</comment>
<comment type="disease" evidence="16">
    <disease id="DI-05917">
        <name>IFAP syndrome 2</name>
        <acronym>IFAP2</acronym>
        <description>An autosomal dominant form of IFAP syndrome, a disease characterized by a peculiar triad of follicular ichthyosis, total or subtotal atrichia, and photophobia of varying degree. IFAP2 patients manifest ichthyosis follicularis or follicular hyperkeratosis, hyperkeratotic plaques, sparse to no body hair, and photophobia with punctate corneal epithelial defects, corneal pannus, and complicated cataract. Ultrastructural hair analysis shows trichorrhexis nodosa.</description>
        <dbReference type="MIM" id="619016"/>
    </disease>
    <text>The disease is caused by variants affecting the gene represented in this entry.</text>
</comment>
<comment type="disease" evidence="14 17">
    <disease id="DI-05948">
        <name>Mucoepithelial dysplasia, hereditary</name>
        <acronym>HMD</acronym>
        <description>An autosomal dominant genodermatosis mainly characterized by chronic mucosal lesions associated with keratitis, non-scarring alopecia, keratosis pilaris and perineal intertrigo.</description>
        <dbReference type="MIM" id="158310"/>
    </disease>
    <text>The disease is caused by variants affecting the gene represented in this entry.</text>
</comment>
<comment type="similarity">
    <text evidence="26">Belongs to the SREBP family.</text>
</comment>
<comment type="sequence caution" evidence="26">
    <conflict type="erroneous initiation">
        <sequence resource="EMBL-CDS" id="AAB28522"/>
    </conflict>
    <text>Truncated N-terminus.</text>
</comment>
<comment type="sequence caution" evidence="26">
    <conflict type="miscellaneous discrepancy">
        <sequence resource="EMBL-CDS" id="BAD92846"/>
    </conflict>
    <text>Intron retention.</text>
</comment>
<comment type="online information" name="Wikipedia">
    <link uri="https://en.wikipedia.org/wiki/Sterol_regulatory_element_binding_protein"/>
    <text>Sterol regulatory element-binding protein entry</text>
</comment>
<keyword id="KW-0002">3D-structure</keyword>
<keyword id="KW-0010">Activator</keyword>
<keyword id="KW-0025">Alternative splicing</keyword>
<keyword id="KW-0153">Cholesterol metabolism</keyword>
<keyword id="KW-0968">Cytoplasmic vesicle</keyword>
<keyword id="KW-0903">Direct protein sequencing</keyword>
<keyword id="KW-0225">Disease variant</keyword>
<keyword id="KW-0238">DNA-binding</keyword>
<keyword id="KW-0256">Endoplasmic reticulum</keyword>
<keyword id="KW-0333">Golgi apparatus</keyword>
<keyword id="KW-0977">Ichthyosis</keyword>
<keyword id="KW-0443">Lipid metabolism</keyword>
<keyword id="KW-0472">Membrane</keyword>
<keyword id="KW-0539">Nucleus</keyword>
<keyword id="KW-0597">Phosphoprotein</keyword>
<keyword id="KW-1267">Proteomics identification</keyword>
<keyword id="KW-1185">Reference proteome</keyword>
<keyword id="KW-0753">Steroid metabolism</keyword>
<keyword id="KW-1207">Sterol metabolism</keyword>
<keyword id="KW-0804">Transcription</keyword>
<keyword id="KW-0805">Transcription regulation</keyword>
<keyword id="KW-0812">Transmembrane</keyword>
<keyword id="KW-1133">Transmembrane helix</keyword>
<keyword id="KW-0832">Ubl conjugation</keyword>
<organism>
    <name type="scientific">Homo sapiens</name>
    <name type="common">Human</name>
    <dbReference type="NCBI Taxonomy" id="9606"/>
    <lineage>
        <taxon>Eukaryota</taxon>
        <taxon>Metazoa</taxon>
        <taxon>Chordata</taxon>
        <taxon>Craniata</taxon>
        <taxon>Vertebrata</taxon>
        <taxon>Euteleostomi</taxon>
        <taxon>Mammalia</taxon>
        <taxon>Eutheria</taxon>
        <taxon>Euarchontoglires</taxon>
        <taxon>Primates</taxon>
        <taxon>Haplorrhini</taxon>
        <taxon>Catarrhini</taxon>
        <taxon>Hominidae</taxon>
        <taxon>Homo</taxon>
    </lineage>
</organism>
<accession>P36956</accession>
<accession>B0I4X3</accession>
<accession>B0I4X4</accession>
<accession>D3DXC4</accession>
<accession>Q16062</accession>
<accession>Q59F52</accession>
<accession>Q6P4R7</accession>
<accession>Q6PFW7</accession>
<accession>Q6PJ36</accession>
<accession>Q8TAK9</accession>
<proteinExistence type="evidence at protein level"/>
<protein>
    <recommendedName>
        <fullName evidence="25">Sterol regulatory element-binding protein 1</fullName>
        <shortName evidence="25">SREBP-1</shortName>
    </recommendedName>
    <alternativeName>
        <fullName>Class D basic helix-loop-helix protein 1</fullName>
        <shortName>bHLHd1</shortName>
    </alternativeName>
    <alternativeName>
        <fullName evidence="25">Sterol regulatory element-binding transcription factor 1</fullName>
    </alternativeName>
    <component>
        <recommendedName>
            <fullName evidence="26">Processed sterol regulatory element-binding protein 1</fullName>
        </recommendedName>
        <alternativeName>
            <fullName evidence="26">Transcription factor SREBF1</fullName>
        </alternativeName>
    </component>
</protein>
<name>SRBP1_HUMAN</name>
<dbReference type="EMBL" id="U00968">
    <property type="protein sequence ID" value="AAC50051.2"/>
    <property type="molecule type" value="mRNA"/>
</dbReference>
<dbReference type="EMBL" id="S66167">
    <property type="protein sequence ID" value="AAB28522.2"/>
    <property type="status" value="ALT_INIT"/>
    <property type="molecule type" value="mRNA"/>
</dbReference>
<dbReference type="EMBL" id="S66168">
    <property type="protein sequence ID" value="AAB28523.1"/>
    <property type="molecule type" value="mRNA"/>
</dbReference>
<dbReference type="EMBL" id="AB373958">
    <property type="protein sequence ID" value="BAG06742.1"/>
    <property type="molecule type" value="mRNA"/>
</dbReference>
<dbReference type="EMBL" id="AB373959">
    <property type="protein sequence ID" value="BAG06743.1"/>
    <property type="molecule type" value="mRNA"/>
</dbReference>
<dbReference type="EMBL" id="AC122129">
    <property type="status" value="NOT_ANNOTATED_CDS"/>
    <property type="molecule type" value="Genomic_DNA"/>
</dbReference>
<dbReference type="EMBL" id="CH471196">
    <property type="protein sequence ID" value="EAW55689.1"/>
    <property type="molecule type" value="Genomic_DNA"/>
</dbReference>
<dbReference type="EMBL" id="CH471196">
    <property type="protein sequence ID" value="EAW55690.1"/>
    <property type="molecule type" value="Genomic_DNA"/>
</dbReference>
<dbReference type="EMBL" id="BC023621">
    <property type="protein sequence ID" value="AAH23621.1"/>
    <property type="molecule type" value="mRNA"/>
</dbReference>
<dbReference type="EMBL" id="BC026962">
    <property type="protein sequence ID" value="AAH26962.1"/>
    <property type="molecule type" value="mRNA"/>
</dbReference>
<dbReference type="EMBL" id="BC057388">
    <property type="protein sequence ID" value="AAH57388.1"/>
    <property type="molecule type" value="mRNA"/>
</dbReference>
<dbReference type="EMBL" id="BC063281">
    <property type="protein sequence ID" value="AAH63281.1"/>
    <property type="molecule type" value="mRNA"/>
</dbReference>
<dbReference type="EMBL" id="AB209609">
    <property type="protein sequence ID" value="BAD92846.1"/>
    <property type="status" value="ALT_SEQ"/>
    <property type="molecule type" value="mRNA"/>
</dbReference>
<dbReference type="CCDS" id="CCDS11189.1">
    <molecule id="P36956-1"/>
</dbReference>
<dbReference type="CCDS" id="CCDS32583.1">
    <molecule id="P36956-4"/>
</dbReference>
<dbReference type="PIR" id="A48845">
    <property type="entry name" value="A48845"/>
</dbReference>
<dbReference type="RefSeq" id="NP_001005291.1">
    <molecule id="P36956-4"/>
    <property type="nucleotide sequence ID" value="NM_001005291.3"/>
</dbReference>
<dbReference type="RefSeq" id="NP_004167.3">
    <molecule id="P36956-1"/>
    <property type="nucleotide sequence ID" value="NM_004176.4"/>
</dbReference>
<dbReference type="PDB" id="1AM9">
    <property type="method" value="X-ray"/>
    <property type="resolution" value="2.30 A"/>
    <property type="chains" value="A/B/C/D=319-400"/>
</dbReference>
<dbReference type="PDBsum" id="1AM9"/>
<dbReference type="SMR" id="P36956"/>
<dbReference type="BioGRID" id="112598">
    <property type="interactions" value="173"/>
</dbReference>
<dbReference type="ComplexPortal" id="CPX-25745">
    <property type="entry name" value="SREBP-SCAP transcription regulator complex, SREBF1 variant"/>
</dbReference>
<dbReference type="CORUM" id="P36956"/>
<dbReference type="DIP" id="DIP-331N"/>
<dbReference type="FunCoup" id="P36956">
    <property type="interactions" value="2275"/>
</dbReference>
<dbReference type="IntAct" id="P36956">
    <property type="interactions" value="38"/>
</dbReference>
<dbReference type="MINT" id="P36956"/>
<dbReference type="STRING" id="9606.ENSP00000348069"/>
<dbReference type="BindingDB" id="P36956"/>
<dbReference type="ChEMBL" id="CHEMBL4630818"/>
<dbReference type="DrugBank" id="DB03756">
    <property type="generic name" value="Doconexent"/>
</dbReference>
<dbReference type="DrugBank" id="DB13961">
    <property type="generic name" value="Fish oil"/>
</dbReference>
<dbReference type="DrugBank" id="DB11133">
    <property type="generic name" value="Omega-3 fatty acids"/>
</dbReference>
<dbReference type="DrugBank" id="DB09539">
    <property type="generic name" value="Omega-3-acid ethyl esters"/>
</dbReference>
<dbReference type="DrugCentral" id="P36956"/>
<dbReference type="GlyGen" id="P36956">
    <property type="glycosylation" value="3 sites, 2 O-linked glycans (1 site)"/>
</dbReference>
<dbReference type="iPTMnet" id="P36956"/>
<dbReference type="PhosphoSitePlus" id="P36956"/>
<dbReference type="SwissPalm" id="P36956"/>
<dbReference type="BioMuta" id="SREBF1"/>
<dbReference type="DMDM" id="166897633"/>
<dbReference type="jPOST" id="P36956"/>
<dbReference type="MassIVE" id="P36956"/>
<dbReference type="PaxDb" id="9606-ENSP00000348069"/>
<dbReference type="PeptideAtlas" id="P36956"/>
<dbReference type="ProteomicsDB" id="2552"/>
<dbReference type="ProteomicsDB" id="55244">
    <molecule id="P36956-1"/>
</dbReference>
<dbReference type="ProteomicsDB" id="55245">
    <molecule id="P36956-2"/>
</dbReference>
<dbReference type="ProteomicsDB" id="55246">
    <molecule id="P36956-3"/>
</dbReference>
<dbReference type="ProteomicsDB" id="55247">
    <molecule id="P36956-4"/>
</dbReference>
<dbReference type="Pumba" id="P36956"/>
<dbReference type="Antibodypedia" id="3952">
    <property type="antibodies" value="654 antibodies from 39 providers"/>
</dbReference>
<dbReference type="DNASU" id="6720"/>
<dbReference type="Ensembl" id="ENST00000261646.11">
    <molecule id="P36956-1"/>
    <property type="protein sequence ID" value="ENSP00000261646.5"/>
    <property type="gene ID" value="ENSG00000072310.18"/>
</dbReference>
<dbReference type="Ensembl" id="ENST00000355815.8">
    <molecule id="P36956-4"/>
    <property type="protein sequence ID" value="ENSP00000348069.4"/>
    <property type="gene ID" value="ENSG00000072310.18"/>
</dbReference>
<dbReference type="Ensembl" id="ENST00000395757.6">
    <molecule id="P36956-2"/>
    <property type="protein sequence ID" value="ENSP00000379106.2"/>
    <property type="gene ID" value="ENSG00000072310.18"/>
</dbReference>
<dbReference type="GeneID" id="6720"/>
<dbReference type="KEGG" id="hsa:6720"/>
<dbReference type="MANE-Select" id="ENST00000261646.11">
    <property type="protein sequence ID" value="ENSP00000261646.5"/>
    <property type="RefSeq nucleotide sequence ID" value="NM_004176.5"/>
    <property type="RefSeq protein sequence ID" value="NP_004167.3"/>
</dbReference>
<dbReference type="UCSC" id="uc002grt.3">
    <molecule id="P36956-1"/>
    <property type="organism name" value="human"/>
</dbReference>
<dbReference type="AGR" id="HGNC:11289"/>
<dbReference type="CTD" id="6720"/>
<dbReference type="DisGeNET" id="6720"/>
<dbReference type="GeneCards" id="SREBF1"/>
<dbReference type="HGNC" id="HGNC:11289">
    <property type="gene designation" value="SREBF1"/>
</dbReference>
<dbReference type="HPA" id="ENSG00000072310">
    <property type="expression patterns" value="Tissue enhanced (adrenal)"/>
</dbReference>
<dbReference type="MalaCards" id="SREBF1"/>
<dbReference type="MIM" id="158310">
    <property type="type" value="phenotype"/>
</dbReference>
<dbReference type="MIM" id="184756">
    <property type="type" value="gene"/>
</dbReference>
<dbReference type="MIM" id="619016">
    <property type="type" value="phenotype"/>
</dbReference>
<dbReference type="neXtProt" id="NX_P36956"/>
<dbReference type="OpenTargets" id="ENSG00000072310"/>
<dbReference type="Orphanet" id="388">
    <property type="disease" value="Hirschsprung disease"/>
</dbReference>
<dbReference type="PharmGKB" id="PA335"/>
<dbReference type="VEuPathDB" id="HostDB:ENSG00000072310"/>
<dbReference type="eggNOG" id="KOG2588">
    <property type="taxonomic scope" value="Eukaryota"/>
</dbReference>
<dbReference type="GeneTree" id="ENSGT00940000159156"/>
<dbReference type="InParanoid" id="P36956"/>
<dbReference type="OMA" id="QLCQHIP"/>
<dbReference type="OrthoDB" id="2133190at2759"/>
<dbReference type="PAN-GO" id="P36956">
    <property type="GO annotations" value="4 GO annotations based on evolutionary models"/>
</dbReference>
<dbReference type="PhylomeDB" id="P36956"/>
<dbReference type="TreeFam" id="TF313894"/>
<dbReference type="PathwayCommons" id="P36956"/>
<dbReference type="Reactome" id="R-HSA-1368082">
    <property type="pathway name" value="RORA activates gene expression"/>
</dbReference>
<dbReference type="Reactome" id="R-HSA-1655829">
    <property type="pathway name" value="Regulation of cholesterol biosynthesis by SREBP (SREBF)"/>
</dbReference>
<dbReference type="Reactome" id="R-HSA-191273">
    <property type="pathway name" value="Cholesterol biosynthesis"/>
</dbReference>
<dbReference type="Reactome" id="R-HSA-1989781">
    <property type="pathway name" value="PPARA activates gene expression"/>
</dbReference>
<dbReference type="Reactome" id="R-HSA-2426168">
    <property type="pathway name" value="Activation of gene expression by SREBF (SREBP)"/>
</dbReference>
<dbReference type="Reactome" id="R-HSA-381340">
    <molecule id="P36956-1"/>
    <property type="pathway name" value="Transcriptional regulation of white adipocyte differentiation"/>
</dbReference>
<dbReference type="Reactome" id="R-HSA-9029558">
    <molecule id="P36956-3"/>
    <property type="pathway name" value="NR1H2 &amp; NR1H3 regulate gene expression linked to lipogenesis"/>
</dbReference>
<dbReference type="Reactome" id="R-HSA-9615017">
    <property type="pathway name" value="FOXO-mediated transcription of oxidative stress, metabolic and neuronal genes"/>
</dbReference>
<dbReference type="SignaLink" id="P36956"/>
<dbReference type="SIGNOR" id="P36956"/>
<dbReference type="BioGRID-ORCS" id="6720">
    <property type="hits" value="184 hits in 1199 CRISPR screens"/>
</dbReference>
<dbReference type="ChiTaRS" id="SREBF1">
    <property type="organism name" value="human"/>
</dbReference>
<dbReference type="EvolutionaryTrace" id="P36956"/>
<dbReference type="GeneWiki" id="SREBF1"/>
<dbReference type="GenomeRNAi" id="6720"/>
<dbReference type="Pharos" id="P36956">
    <property type="development level" value="Tchem"/>
</dbReference>
<dbReference type="PRO" id="PR:P36956"/>
<dbReference type="Proteomes" id="UP000005640">
    <property type="component" value="Chromosome 17"/>
</dbReference>
<dbReference type="RNAct" id="P36956">
    <property type="molecule type" value="protein"/>
</dbReference>
<dbReference type="Bgee" id="ENSG00000072310">
    <property type="expression patterns" value="Expressed in left adrenal gland and 105 other cell types or tissues"/>
</dbReference>
<dbReference type="ExpressionAtlas" id="P36956">
    <property type="expression patterns" value="baseline and differential"/>
</dbReference>
<dbReference type="GO" id="GO:0000785">
    <property type="term" value="C:chromatin"/>
    <property type="evidence" value="ECO:0000247"/>
    <property type="project" value="NTNU_SB"/>
</dbReference>
<dbReference type="GO" id="GO:0005737">
    <property type="term" value="C:cytoplasm"/>
    <property type="evidence" value="ECO:0000250"/>
    <property type="project" value="UniProtKB"/>
</dbReference>
<dbReference type="GO" id="GO:0005829">
    <property type="term" value="C:cytosol"/>
    <property type="evidence" value="ECO:0000304"/>
    <property type="project" value="Reactome"/>
</dbReference>
<dbReference type="GO" id="GO:0005783">
    <property type="term" value="C:endoplasmic reticulum"/>
    <property type="evidence" value="ECO:0000314"/>
    <property type="project" value="UniProtKB"/>
</dbReference>
<dbReference type="GO" id="GO:0005789">
    <property type="term" value="C:endoplasmic reticulum membrane"/>
    <property type="evidence" value="ECO:0000304"/>
    <property type="project" value="Reactome"/>
</dbReference>
<dbReference type="GO" id="GO:0012507">
    <property type="term" value="C:ER to Golgi transport vesicle membrane"/>
    <property type="evidence" value="ECO:0007669"/>
    <property type="project" value="UniProtKB-SubCell"/>
</dbReference>
<dbReference type="GO" id="GO:0000139">
    <property type="term" value="C:Golgi membrane"/>
    <property type="evidence" value="ECO:0000304"/>
    <property type="project" value="Reactome"/>
</dbReference>
<dbReference type="GO" id="GO:0005635">
    <property type="term" value="C:nuclear envelope"/>
    <property type="evidence" value="ECO:0000304"/>
    <property type="project" value="ProtInc"/>
</dbReference>
<dbReference type="GO" id="GO:0005654">
    <property type="term" value="C:nucleoplasm"/>
    <property type="evidence" value="ECO:0000314"/>
    <property type="project" value="HPA"/>
</dbReference>
<dbReference type="GO" id="GO:0005634">
    <property type="term" value="C:nucleus"/>
    <property type="evidence" value="ECO:0000314"/>
    <property type="project" value="BHF-UCL"/>
</dbReference>
<dbReference type="GO" id="GO:0032991">
    <property type="term" value="C:protein-containing complex"/>
    <property type="evidence" value="ECO:0007669"/>
    <property type="project" value="Ensembl"/>
</dbReference>
<dbReference type="GO" id="GO:0003682">
    <property type="term" value="F:chromatin binding"/>
    <property type="evidence" value="ECO:0007669"/>
    <property type="project" value="Ensembl"/>
</dbReference>
<dbReference type="GO" id="GO:0003677">
    <property type="term" value="F:DNA binding"/>
    <property type="evidence" value="ECO:0000250"/>
    <property type="project" value="UniProtKB"/>
</dbReference>
<dbReference type="GO" id="GO:0001228">
    <property type="term" value="F:DNA-binding transcription activator activity, RNA polymerase II-specific"/>
    <property type="evidence" value="ECO:0000314"/>
    <property type="project" value="BHF-UCL"/>
</dbReference>
<dbReference type="GO" id="GO:0003700">
    <property type="term" value="F:DNA-binding transcription factor activity"/>
    <property type="evidence" value="ECO:0000314"/>
    <property type="project" value="HGNC-UCL"/>
</dbReference>
<dbReference type="GO" id="GO:0000981">
    <property type="term" value="F:DNA-binding transcription factor activity, RNA polymerase II-specific"/>
    <property type="evidence" value="ECO:0000314"/>
    <property type="project" value="UniProt"/>
</dbReference>
<dbReference type="GO" id="GO:0004879">
    <property type="term" value="F:nuclear receptor activity"/>
    <property type="evidence" value="ECO:0000314"/>
    <property type="project" value="ParkinsonsUK-UCL"/>
</dbReference>
<dbReference type="GO" id="GO:0046983">
    <property type="term" value="F:protein dimerization activity"/>
    <property type="evidence" value="ECO:0007669"/>
    <property type="project" value="InterPro"/>
</dbReference>
<dbReference type="GO" id="GO:0019901">
    <property type="term" value="F:protein kinase binding"/>
    <property type="evidence" value="ECO:0007669"/>
    <property type="project" value="Ensembl"/>
</dbReference>
<dbReference type="GO" id="GO:0044877">
    <property type="term" value="F:protein-containing complex binding"/>
    <property type="evidence" value="ECO:0007669"/>
    <property type="project" value="Ensembl"/>
</dbReference>
<dbReference type="GO" id="GO:0000978">
    <property type="term" value="F:RNA polymerase II cis-regulatory region sequence-specific DNA binding"/>
    <property type="evidence" value="ECO:0000318"/>
    <property type="project" value="GO_Central"/>
</dbReference>
<dbReference type="GO" id="GO:0000977">
    <property type="term" value="F:RNA polymerase II transcription regulatory region sequence-specific DNA binding"/>
    <property type="evidence" value="ECO:0000314"/>
    <property type="project" value="ParkinsonsUK-UCL"/>
</dbReference>
<dbReference type="GO" id="GO:1990837">
    <property type="term" value="F:sequence-specific double-stranded DNA binding"/>
    <property type="evidence" value="ECO:0000314"/>
    <property type="project" value="ARUK-UCL"/>
</dbReference>
<dbReference type="GO" id="GO:0032810">
    <property type="term" value="F:sterol response element binding"/>
    <property type="evidence" value="ECO:0000314"/>
    <property type="project" value="HGNC-UCL"/>
</dbReference>
<dbReference type="GO" id="GO:0001221">
    <property type="term" value="F:transcription coregulator binding"/>
    <property type="evidence" value="ECO:0000353"/>
    <property type="project" value="UniProtKB"/>
</dbReference>
<dbReference type="GO" id="GO:0071398">
    <property type="term" value="P:cellular response to fatty acid"/>
    <property type="evidence" value="ECO:0007669"/>
    <property type="project" value="Ensembl"/>
</dbReference>
<dbReference type="GO" id="GO:0009267">
    <property type="term" value="P:cellular response to starvation"/>
    <property type="evidence" value="ECO:0000250"/>
    <property type="project" value="HGNC-UCL"/>
</dbReference>
<dbReference type="GO" id="GO:0006695">
    <property type="term" value="P:cholesterol biosynthetic process"/>
    <property type="evidence" value="ECO:0007669"/>
    <property type="project" value="Ensembl"/>
</dbReference>
<dbReference type="GO" id="GO:0007623">
    <property type="term" value="P:circadian rhythm"/>
    <property type="evidence" value="ECO:0007669"/>
    <property type="project" value="Ensembl"/>
</dbReference>
<dbReference type="GO" id="GO:0045444">
    <property type="term" value="P:fat cell differentiation"/>
    <property type="evidence" value="ECO:0007669"/>
    <property type="project" value="Ensembl"/>
</dbReference>
<dbReference type="GO" id="GO:0008286">
    <property type="term" value="P:insulin receptor signaling pathway"/>
    <property type="evidence" value="ECO:0007669"/>
    <property type="project" value="Ensembl"/>
</dbReference>
<dbReference type="GO" id="GO:0030073">
    <property type="term" value="P:insulin secretion"/>
    <property type="evidence" value="ECO:0007669"/>
    <property type="project" value="Ensembl"/>
</dbReference>
<dbReference type="GO" id="GO:0008610">
    <property type="term" value="P:lipid biosynthetic process"/>
    <property type="evidence" value="ECO:0000315"/>
    <property type="project" value="UniProtKB"/>
</dbReference>
<dbReference type="GO" id="GO:0006629">
    <property type="term" value="P:lipid metabolic process"/>
    <property type="evidence" value="ECO:0000304"/>
    <property type="project" value="ProtInc"/>
</dbReference>
<dbReference type="GO" id="GO:0030324">
    <property type="term" value="P:lung development"/>
    <property type="evidence" value="ECO:0007669"/>
    <property type="project" value="Ensembl"/>
</dbReference>
<dbReference type="GO" id="GO:0042789">
    <property type="term" value="P:mRNA transcription by RNA polymerase II"/>
    <property type="evidence" value="ECO:0007669"/>
    <property type="project" value="Ensembl"/>
</dbReference>
<dbReference type="GO" id="GO:0046676">
    <property type="term" value="P:negative regulation of insulin secretion"/>
    <property type="evidence" value="ECO:0007669"/>
    <property type="project" value="Ensembl"/>
</dbReference>
<dbReference type="GO" id="GO:0000122">
    <property type="term" value="P:negative regulation of transcription by RNA polymerase II"/>
    <property type="evidence" value="ECO:0007669"/>
    <property type="project" value="Ensembl"/>
</dbReference>
<dbReference type="GO" id="GO:0090209">
    <property type="term" value="P:negative regulation of triglyceride metabolic process"/>
    <property type="evidence" value="ECO:0000314"/>
    <property type="project" value="BHF-UCL"/>
</dbReference>
<dbReference type="GO" id="GO:0045542">
    <property type="term" value="P:positive regulation of cholesterol biosynthetic process"/>
    <property type="evidence" value="ECO:0000314"/>
    <property type="project" value="UniProt"/>
</dbReference>
<dbReference type="GO" id="GO:1902895">
    <property type="term" value="P:positive regulation of miRNA transcription"/>
    <property type="evidence" value="ECO:0000314"/>
    <property type="project" value="BHF-UCL"/>
</dbReference>
<dbReference type="GO" id="GO:0045944">
    <property type="term" value="P:positive regulation of transcription by RNA polymerase II"/>
    <property type="evidence" value="ECO:0000314"/>
    <property type="project" value="BHF-UCL"/>
</dbReference>
<dbReference type="GO" id="GO:0010867">
    <property type="term" value="P:positive regulation of triglyceride biosynthetic process"/>
    <property type="evidence" value="ECO:0000250"/>
    <property type="project" value="UniProtKB"/>
</dbReference>
<dbReference type="GO" id="GO:0019217">
    <property type="term" value="P:regulation of fatty acid metabolic process"/>
    <property type="evidence" value="ECO:0007669"/>
    <property type="project" value="Ensembl"/>
</dbReference>
<dbReference type="GO" id="GO:0003062">
    <property type="term" value="P:regulation of heart rate by chemical signal"/>
    <property type="evidence" value="ECO:0007669"/>
    <property type="project" value="Ensembl"/>
</dbReference>
<dbReference type="GO" id="GO:0010883">
    <property type="term" value="P:regulation of lipid storage"/>
    <property type="evidence" value="ECO:0007669"/>
    <property type="project" value="Ensembl"/>
</dbReference>
<dbReference type="GO" id="GO:1901524">
    <property type="term" value="P:regulation of mitophagy"/>
    <property type="evidence" value="ECO:0000315"/>
    <property type="project" value="ParkinsonsUK-UCL"/>
</dbReference>
<dbReference type="GO" id="GO:0031647">
    <property type="term" value="P:regulation of protein stability"/>
    <property type="evidence" value="ECO:0000315"/>
    <property type="project" value="ParkinsonsUK-UCL"/>
</dbReference>
<dbReference type="GO" id="GO:1903214">
    <property type="term" value="P:regulation of protein targeting to mitochondrion"/>
    <property type="evidence" value="ECO:0000315"/>
    <property type="project" value="ParkinsonsUK-UCL"/>
</dbReference>
<dbReference type="GO" id="GO:0006357">
    <property type="term" value="P:regulation of transcription by RNA polymerase II"/>
    <property type="evidence" value="ECO:0000318"/>
    <property type="project" value="GO_Central"/>
</dbReference>
<dbReference type="GO" id="GO:0051591">
    <property type="term" value="P:response to cAMP"/>
    <property type="evidence" value="ECO:0007669"/>
    <property type="project" value="Ensembl"/>
</dbReference>
<dbReference type="GO" id="GO:0045471">
    <property type="term" value="P:response to ethanol"/>
    <property type="evidence" value="ECO:0007669"/>
    <property type="project" value="Ensembl"/>
</dbReference>
<dbReference type="GO" id="GO:0032094">
    <property type="term" value="P:response to food"/>
    <property type="evidence" value="ECO:0007669"/>
    <property type="project" value="Ensembl"/>
</dbReference>
<dbReference type="GO" id="GO:0009750">
    <property type="term" value="P:response to fructose"/>
    <property type="evidence" value="ECO:0007669"/>
    <property type="project" value="Ensembl"/>
</dbReference>
<dbReference type="GO" id="GO:0033762">
    <property type="term" value="P:response to glucagon"/>
    <property type="evidence" value="ECO:0007669"/>
    <property type="project" value="Ensembl"/>
</dbReference>
<dbReference type="GO" id="GO:0009749">
    <property type="term" value="P:response to glucose"/>
    <property type="evidence" value="ECO:0007669"/>
    <property type="project" value="Ensembl"/>
</dbReference>
<dbReference type="GO" id="GO:0007584">
    <property type="term" value="P:response to nutrient"/>
    <property type="evidence" value="ECO:0007669"/>
    <property type="project" value="Ensembl"/>
</dbReference>
<dbReference type="GO" id="GO:0032570">
    <property type="term" value="P:response to progesterone"/>
    <property type="evidence" value="ECO:0007669"/>
    <property type="project" value="Ensembl"/>
</dbReference>
<dbReference type="GO" id="GO:0032526">
    <property type="term" value="P:response to retinoic acid"/>
    <property type="evidence" value="ECO:0007669"/>
    <property type="project" value="Ensembl"/>
</dbReference>
<dbReference type="GO" id="GO:0009410">
    <property type="term" value="P:response to xenobiotic stimulus"/>
    <property type="evidence" value="ECO:0007669"/>
    <property type="project" value="Ensembl"/>
</dbReference>
<dbReference type="GO" id="GO:0032933">
    <property type="term" value="P:SREBP signaling pathway"/>
    <property type="evidence" value="ECO:0000314"/>
    <property type="project" value="CACAO"/>
</dbReference>
<dbReference type="CDD" id="cd18921">
    <property type="entry name" value="bHLHzip_SREBP1"/>
    <property type="match status" value="1"/>
</dbReference>
<dbReference type="FunFam" id="4.10.280.10:FF:000016">
    <property type="entry name" value="Sterol regulatory element-binding transcription factor 1"/>
    <property type="match status" value="1"/>
</dbReference>
<dbReference type="Gene3D" id="4.10.280.10">
    <property type="entry name" value="Helix-loop-helix DNA-binding domain"/>
    <property type="match status" value="1"/>
</dbReference>
<dbReference type="IDEAL" id="IID00235"/>
<dbReference type="InterPro" id="IPR011598">
    <property type="entry name" value="bHLH_dom"/>
</dbReference>
<dbReference type="InterPro" id="IPR036638">
    <property type="entry name" value="HLH_DNA-bd_sf"/>
</dbReference>
<dbReference type="PANTHER" id="PTHR46062">
    <property type="entry name" value="STEROL REGULATORY ELEMENT-BINDING PROTEIN"/>
    <property type="match status" value="1"/>
</dbReference>
<dbReference type="PANTHER" id="PTHR46062:SF2">
    <property type="entry name" value="STEROL REGULATORY ELEMENT-BINDING PROTEIN 1"/>
    <property type="match status" value="1"/>
</dbReference>
<dbReference type="Pfam" id="PF00010">
    <property type="entry name" value="HLH"/>
    <property type="match status" value="1"/>
</dbReference>
<dbReference type="SMART" id="SM00353">
    <property type="entry name" value="HLH"/>
    <property type="match status" value="1"/>
</dbReference>
<dbReference type="SUPFAM" id="SSF47459">
    <property type="entry name" value="HLH, helix-loop-helix DNA-binding domain"/>
    <property type="match status" value="1"/>
</dbReference>
<dbReference type="PROSITE" id="PS50888">
    <property type="entry name" value="BHLH"/>
    <property type="match status" value="1"/>
</dbReference>
<evidence type="ECO:0000250" key="1">
    <source>
        <dbReference type="UniProtKB" id="P56720"/>
    </source>
</evidence>
<evidence type="ECO:0000250" key="2">
    <source>
        <dbReference type="UniProtKB" id="Q12772"/>
    </source>
</evidence>
<evidence type="ECO:0000250" key="3">
    <source>
        <dbReference type="UniProtKB" id="Q9WTN3"/>
    </source>
</evidence>
<evidence type="ECO:0000255" key="4"/>
<evidence type="ECO:0000255" key="5">
    <source>
        <dbReference type="PROSITE-ProRule" id="PRU00981"/>
    </source>
</evidence>
<evidence type="ECO:0000256" key="6">
    <source>
        <dbReference type="SAM" id="MobiDB-lite"/>
    </source>
</evidence>
<evidence type="ECO:0000269" key="7">
    <source>
    </source>
</evidence>
<evidence type="ECO:0000269" key="8">
    <source>
    </source>
</evidence>
<evidence type="ECO:0000269" key="9">
    <source>
    </source>
</evidence>
<evidence type="ECO:0000269" key="10">
    <source>
    </source>
</evidence>
<evidence type="ECO:0000269" key="11">
    <source>
    </source>
</evidence>
<evidence type="ECO:0000269" key="12">
    <source>
    </source>
</evidence>
<evidence type="ECO:0000269" key="13">
    <source>
    </source>
</evidence>
<evidence type="ECO:0000269" key="14">
    <source>
    </source>
</evidence>
<evidence type="ECO:0000269" key="15">
    <source>
    </source>
</evidence>
<evidence type="ECO:0000269" key="16">
    <source>
    </source>
</evidence>
<evidence type="ECO:0000269" key="17">
    <source>
    </source>
</evidence>
<evidence type="ECO:0000269" key="18">
    <source>
    </source>
</evidence>
<evidence type="ECO:0000269" key="19">
    <source>
    </source>
</evidence>
<evidence type="ECO:0000269" key="20">
    <source>
    </source>
</evidence>
<evidence type="ECO:0000269" key="21">
    <source>
    </source>
</evidence>
<evidence type="ECO:0000303" key="22">
    <source>
    </source>
</evidence>
<evidence type="ECO:0000303" key="23">
    <source>
    </source>
</evidence>
<evidence type="ECO:0000303" key="24">
    <source>
    </source>
</evidence>
<evidence type="ECO:0000303" key="25">
    <source>
    </source>
</evidence>
<evidence type="ECO:0000305" key="26"/>
<evidence type="ECO:0000305" key="27">
    <source>
    </source>
</evidence>
<evidence type="ECO:0000305" key="28">
    <source>
    </source>
</evidence>
<evidence type="ECO:0000305" key="29">
    <source>
    </source>
</evidence>
<evidence type="ECO:0000305" key="30">
    <source>
    </source>
</evidence>
<evidence type="ECO:0000312" key="31">
    <source>
        <dbReference type="HGNC" id="HGNC:11289"/>
    </source>
</evidence>
<evidence type="ECO:0007744" key="32">
    <source>
    </source>
</evidence>
<evidence type="ECO:0007744" key="33">
    <source>
    </source>
</evidence>
<evidence type="ECO:0007829" key="34">
    <source>
        <dbReference type="PDB" id="1AM9"/>
    </source>
</evidence>
<sequence>MDEPPFSEAALEQALGEPCDLDAALLTDIEDMLQLINNQDSDFPGLFDPPYAGSGAGGTDPASPDTSSPGSLSPPPATLSSSLEAFLSGPQAAPSPLSPPQPAPTPLKMYPSMPAFSPGPGIKEESVPLSILQTPTPQPLPGALLPQSFPAPAPPQFSSTPVLGYPSPPGGFSTGSPPGNTQQPLPGLPLASPPGVPPVSLHTQVQSVVPQQLLTVTAAPTAAPVTTTVTSQIQQVPVLLQPHFIKADSLLLTAMKTDGATVKAAGLSPLVSGTTVQTGPLPTLVSGGTILATVPLVVDAEKLPINRLAAGSKAPASAQSRGEKRTAHNAIEKRYRSSINDKIIELKDLVVGTEAKLNKSAVLRKAIDYIRFLQHSNQKLKQENLSLRTAVHKSKSLKDLVSACGSGGNTDVLMEGVKTEVEDTLTPPPSDAGSPFQSSPLSLGSRGSGSGGSGSDSEPDSPVFEDSKAKPEQRPSLHSRGMLDRSRLALCTLVFLCLSCNPLASLLGARGLPSPSDTTSVYHSPGRNVLGTESRDGPGWAQWLLPPVVWLLNGLLVLVSLVLLFVYGEPVTRPHSGPAVYFWRHRKQADLDLARGDFAQAAQQLWLALRALGRPLPTSHLDLACSLLWNLIRHLLQRLWVGRWLAGRAGGLQQDCALRVDASASARDAALVYHKLHQLHTMGKHTGGHLTATNLALSALNLAECAGDAVSVATLAEIYVAAALRVKTSLPRALHFLTRFFLSSARQACLAQSGSVPPAMQWLCHPVGHRFFVDGDWSVLSTPWESLYSLAGNPVDPLAQVTQLFREHLLERALNCVTQPNPSPGSADGDKEFSDALGYLQLLNSCSDAAGAPAYSFSISSSMATTTGVDPVAKWWASLTAVVIHWLRRDEEAAERLCPLVEHLPRVLQESERPLPRAALHSFKAARALLGCAKAESGPASLTICEKASGYLQDSLATTPASSSIDKAVQLFLCDLLLVVRTSLWRQQQPPAPAPAAQGTSSRPQASALELRGFQRDLSSLRRLAQSFRPAMRRVFLHEATARLMAGASPTRTHQLLDRSLRRRAGPGGKGGAVAELEPRPTRREHAEALLLASCYLPPGFLSAPGQRVGMLAEAARTLEKLGDRRLLHDCQQMLMRLGGGTTVTSS</sequence>
<feature type="chain" id="PRO_0000127447" description="Sterol regulatory element-binding protein 1">
    <location>
        <begin position="1"/>
        <end position="1147"/>
    </location>
</feature>
<feature type="chain" id="PRO_0000314029" description="Processed sterol regulatory element-binding protein 1" evidence="2">
    <location>
        <begin position="1"/>
        <end position="490"/>
    </location>
</feature>
<feature type="topological domain" description="Cytoplasmic" evidence="4">
    <location>
        <begin position="1"/>
        <end position="487"/>
    </location>
</feature>
<feature type="transmembrane region" description="Helical" evidence="4">
    <location>
        <begin position="488"/>
        <end position="508"/>
    </location>
</feature>
<feature type="topological domain" description="Lumenal" evidence="4">
    <location>
        <begin position="509"/>
        <end position="547"/>
    </location>
</feature>
<feature type="transmembrane region" description="Helical" evidence="4">
    <location>
        <begin position="548"/>
        <end position="568"/>
    </location>
</feature>
<feature type="topological domain" description="Cytoplasmic" evidence="4">
    <location>
        <begin position="569"/>
        <end position="1147"/>
    </location>
</feature>
<feature type="domain" description="bHLH" evidence="5">
    <location>
        <begin position="323"/>
        <end position="373"/>
    </location>
</feature>
<feature type="region of interest" description="Transcriptional activation (acidic)" evidence="29">
    <location>
        <begin position="1"/>
        <end position="60"/>
    </location>
</feature>
<feature type="region of interest" description="Disordered" evidence="6">
    <location>
        <begin position="39"/>
        <end position="193"/>
    </location>
</feature>
<feature type="region of interest" description="Interaction with LMNA" evidence="3">
    <location>
        <begin position="234"/>
        <end position="497"/>
    </location>
</feature>
<feature type="region of interest" description="Leucine-zipper">
    <location>
        <begin position="373"/>
        <end position="394"/>
    </location>
</feature>
<feature type="region of interest" description="Disordered" evidence="6">
    <location>
        <begin position="421"/>
        <end position="479"/>
    </location>
</feature>
<feature type="short sequence motif" description="9aaTAD" evidence="13">
    <location>
        <begin position="27"/>
        <end position="35"/>
    </location>
</feature>
<feature type="compositionally biased region" description="Low complexity" evidence="6">
    <location>
        <begin position="62"/>
        <end position="71"/>
    </location>
</feature>
<feature type="compositionally biased region" description="Low complexity" evidence="6">
    <location>
        <begin position="78"/>
        <end position="95"/>
    </location>
</feature>
<feature type="compositionally biased region" description="Pro residues" evidence="6">
    <location>
        <begin position="96"/>
        <end position="105"/>
    </location>
</feature>
<feature type="compositionally biased region" description="Low complexity" evidence="6">
    <location>
        <begin position="170"/>
        <end position="190"/>
    </location>
</feature>
<feature type="compositionally biased region" description="Basic and acidic residues" evidence="6">
    <location>
        <begin position="465"/>
        <end position="479"/>
    </location>
</feature>
<feature type="site" description="Cleavage; by caspase-3 and caspase-7" evidence="2">
    <location>
        <begin position="460"/>
        <end position="461"/>
    </location>
</feature>
<feature type="site" description="Cleavage; by MBTPS2" evidence="2">
    <location>
        <begin position="490"/>
        <end position="491"/>
    </location>
</feature>
<feature type="site" description="Cleavage; by MBTPS1" evidence="30">
    <location>
        <begin position="530"/>
        <end position="531"/>
    </location>
</feature>
<feature type="modified residue" description="Phosphoserine" evidence="1">
    <location>
        <position position="98"/>
    </location>
</feature>
<feature type="modified residue" description="Phosphoserine" evidence="32">
    <location>
        <position position="117"/>
    </location>
</feature>
<feature type="modified residue" description="Phosphoserine; by SIK1" evidence="3">
    <location>
        <position position="337"/>
    </location>
</feature>
<feature type="modified residue" description="Phosphoserine; by SIK1" evidence="3">
    <location>
        <position position="338"/>
    </location>
</feature>
<feature type="modified residue" description="Phosphoserine; by AMPK" evidence="3">
    <location>
        <position position="396"/>
    </location>
</feature>
<feature type="modified residue" description="Phosphoserine; by SIK1" evidence="3">
    <location>
        <position position="402"/>
    </location>
</feature>
<feature type="modified residue" description="Phosphoserine" evidence="3">
    <location>
        <position position="457"/>
    </location>
</feature>
<feature type="modified residue" description="Phosphoserine" evidence="33">
    <location>
        <position position="1060"/>
    </location>
</feature>
<feature type="splice variant" id="VSP_002149" description="In isoform SREBP-1C and isoform SREBP-1cDelta." evidence="23 25">
    <original>MDEPPFSEAALEQALGEPCDLDAALLTDI</original>
    <variation>MDCTF</variation>
    <location>
        <begin position="1"/>
        <end position="29"/>
    </location>
</feature>
<feature type="splice variant" id="VSP_030859" description="In isoform 4." evidence="22">
    <original>E</original>
    <variation>EGEVGAGRGRANGLDAPRAGADRGAMDCTFE</variation>
    <location>
        <position position="30"/>
    </location>
</feature>
<feature type="splice variant" id="VSP_047598" description="In isoform SREBP-1aDelta and isoform SREBP-1cDelta." evidence="23">
    <original>AK</original>
    <variation>TE</variation>
    <location>
        <begin position="469"/>
        <end position="470"/>
    </location>
</feature>
<feature type="splice variant" id="VSP_047599" description="In isoform SREBP-1aDelta and isoform SREBP-1cDelta." evidence="23">
    <location>
        <begin position="471"/>
        <end position="1147"/>
    </location>
</feature>
<feature type="splice variant" id="VSP_002150" description="In isoform SREBP-1B and isoform SREBP-1C." evidence="25">
    <original>VFLHEATARLMAGASPTRTHQLLDRSLRRRAGPGGKGGAVAELEPRPTRREHAEALLLASCYLPPGFLSAPGQRVGMLAEAARTLEKLGDRRLLHDCQQMLMRLGGGTTVTSS</original>
    <variation>LMDVLTSESAWALPQHLGKGFPSPSGHKVPGWHGRMD</variation>
    <location>
        <begin position="1035"/>
        <end position="1147"/>
    </location>
</feature>
<feature type="sequence variant" id="VAR_038468" description="In dbSNP:rs17855793." evidence="10">
    <original>N</original>
    <variation>S</variation>
    <location>
        <position position="306"/>
    </location>
</feature>
<feature type="sequence variant" id="VAR_038469" description="In dbSNP:rs35188700.">
    <original>A</original>
    <variation>T</variation>
    <location>
        <position position="309"/>
    </location>
</feature>
<feature type="sequence variant" id="VAR_038470" description="In dbSNP:rs2229590.">
    <original>V</original>
    <variation>M</variation>
    <location>
        <position position="417"/>
    </location>
</feature>
<feature type="sequence variant" id="VAR_085079" description="In IFAP2 and HMD; loss of sterol-regulated protein processing; loss of localization to the nucleus; decreased DNA-binding transcription factor activity RNA polymerase II-specific; dbSNP:rs2033690347." evidence="14 16 17">
    <original>R</original>
    <variation>C</variation>
    <location>
        <position position="527"/>
    </location>
</feature>
<feature type="sequence variant" id="VAR_085080" description="In HMD; dbSNP:rs1428621525." evidence="14">
    <original>R</original>
    <variation>H</variation>
    <location>
        <position position="527"/>
    </location>
</feature>
<feature type="sequence variant" id="VAR_085081" description="In IFAP2; loss of sterol-regulated protein processing; loss of localization to the nucleus; decreased DNA-binding transcription factor activity RNA polymerase II-specific; dbSNP:rs2033689385." evidence="16">
    <location>
        <position position="528"/>
    </location>
</feature>
<feature type="sequence variant" id="VAR_085082" description="In IFAP2; loss of sterol-regulated protein processing; loss of localization to the nucleus; decreased DNA-binding transcription factor activity RNA polymerase II-specific; dbSNP:rs2033688284." evidence="16">
    <original>L</original>
    <variation>P</variation>
    <location>
        <position position="530"/>
    </location>
</feature>
<feature type="sequence variant" id="VAR_038471" description="In dbSNP:rs36215896.">
    <original>V</original>
    <variation>M</variation>
    <location>
        <position position="580"/>
    </location>
</feature>
<feature type="sequence variant" id="VAR_038472" description="In dbSNP:rs2228461.">
    <original>R</original>
    <variation>H</variation>
    <location>
        <position position="746"/>
    </location>
</feature>
<feature type="sequence variant" id="VAR_038473" description="In dbSNP:rs17855792." evidence="10">
    <original>S</original>
    <variation>L</variation>
    <location>
        <position position="834"/>
    </location>
</feature>
<feature type="sequence variant" id="VAR_038474" description="In dbSNP:rs1042017." evidence="19 20">
    <original>T</original>
    <variation>A</variation>
    <location>
        <position position="1000"/>
    </location>
</feature>
<feature type="sequence variant" id="VAR_038475" description="In dbSNP:rs35014224.">
    <original>A</original>
    <variation>P</variation>
    <location>
        <position position="1008"/>
    </location>
</feature>
<feature type="mutagenesis site" description="Abolished transactivation activity." evidence="8">
    <original>Y</original>
    <variation>R</variation>
    <location>
        <position position="335"/>
    </location>
</feature>
<feature type="mutagenesis site" description="No effect on proteolytic processing." evidence="21">
    <original>S</original>
    <variation>A</variation>
    <location>
        <position position="455"/>
    </location>
</feature>
<feature type="mutagenesis site" description="No effect on proteolytic processing." evidence="21">
    <original>D</original>
    <variation>A</variation>
    <location>
        <position position="456"/>
    </location>
</feature>
<feature type="mutagenesis site" description="No effect on proteolytic processing." evidence="21">
    <original>S</original>
    <variation>A</variation>
    <location>
        <position position="457"/>
    </location>
</feature>
<feature type="mutagenesis site" description="No effect on proteolytic processing." evidence="21">
    <original>D</original>
    <variation>A</variation>
    <location>
        <position position="460"/>
    </location>
</feature>
<feature type="mutagenesis site" description="No effect on proteolytic processing." evidence="21">
    <original>D</original>
    <variation>A</variation>
    <location>
        <position position="466"/>
    </location>
</feature>
<feature type="mutagenesis site" description="No effect on proteolytic processing." evidence="21">
    <original>G</original>
    <variation>A</variation>
    <location>
        <position position="481"/>
    </location>
</feature>
<feature type="mutagenesis site" description="No effect on proteolytic processing." evidence="21">
    <original>M</original>
    <variation>A</variation>
    <location>
        <position position="482"/>
    </location>
</feature>
<feature type="mutagenesis site" description="No effect on proteolytic processing." evidence="21">
    <original>L</original>
    <variation>A</variation>
    <location>
        <position position="483"/>
    </location>
</feature>
<feature type="mutagenesis site" description="Strong reduction of proteolytic processing in response to low sterol." evidence="21">
    <original>DRSR</original>
    <variation>AS</variation>
    <location>
        <begin position="484"/>
        <end position="487"/>
    </location>
</feature>
<feature type="mutagenesis site" description="Loss of proteolytic processing in response to low sterol." evidence="21">
    <original>D</original>
    <variation>A</variation>
    <location>
        <position position="484"/>
    </location>
</feature>
<feature type="mutagenesis site" description="No effect on proteolytic processing." evidence="21">
    <original>R</original>
    <variation>A</variation>
    <location>
        <position position="485"/>
    </location>
</feature>
<feature type="mutagenesis site" description="Loss of proteolytic processing in response to low sterol. Transcriptionally inactive." evidence="16 21">
    <original>R</original>
    <variation>A</variation>
    <location>
        <position position="527"/>
    </location>
</feature>
<feature type="helix" evidence="34">
    <location>
        <begin position="321"/>
        <end position="350"/>
    </location>
</feature>
<feature type="helix" evidence="34">
    <location>
        <begin position="359"/>
        <end position="396"/>
    </location>
</feature>
<gene>
    <name evidence="24 31" type="primary">SREBF1</name>
    <name type="synonym">BHLHD1</name>
    <name evidence="25" type="synonym">SREBP1</name>
</gene>
<reference key="1">
    <citation type="journal article" date="1993" name="Cell">
        <title>SREBP-1, a basic-helix-loop-helix-leucine zipper protein that controls transcription of the low density lipoprotein receptor gene.</title>
        <authorList>
            <person name="Yokoyama C."/>
            <person name="Wang X."/>
            <person name="Briggs M.R."/>
            <person name="Admon A."/>
            <person name="Wu J."/>
            <person name="Hua X."/>
            <person name="Goldstein J.L."/>
            <person name="Brown M.S."/>
        </authorList>
    </citation>
    <scope>NUCLEOTIDE SEQUENCE [MRNA] (ISOFORM SREBP-1A)</scope>
    <scope>NUCLEOTIDE SEQUENCE [MRNA] OF 1-29 (ISOFORM SREBP-1C)</scope>
    <scope>NUCLEOTIDE SEQUENCE [MRNA] OF 1035-1147 (ISOFORMS SREBP-1B AND SREBP-1C)</scope>
    <scope>PARTIAL PROTEIN SEQUENCE</scope>
    <scope>VARIANT ALA-1000</scope>
    <scope>FUNCTION</scope>
    <scope>TISSUE SPECIFICITY</scope>
    <source>
        <tissue>Cervix carcinoma</tissue>
    </source>
</reference>
<reference key="2">
    <citation type="journal article" date="1995" name="Genomics">
        <title>Structure of the human gene encoding sterol regulatory element binding protein-1 (SREBF1) and localization of SREBF1 and SREBF2 to chromosomes 17p11.2 and 22q13.</title>
        <authorList>
            <person name="Hua X."/>
            <person name="Wu J."/>
            <person name="Goldstein J.L."/>
            <person name="Brown M.S."/>
            <person name="Hobbs H.H."/>
        </authorList>
    </citation>
    <scope>NUCLEOTIDE SEQUENCE [GENOMIC DNA]</scope>
    <scope>VARIANT ALA-1000</scope>
    <source>
        <tissue>Fetal brain</tissue>
    </source>
</reference>
<reference key="3">
    <citation type="journal article" date="2008" name="Biochem. Biophys. Res. Commun.">
        <title>Alternative splicing produces a constitutively active form of human SREBP-1.</title>
        <authorList>
            <person name="Harada N."/>
            <person name="Yonemoto H."/>
            <person name="Yoshida M."/>
            <person name="Yamamoto H."/>
            <person name="Yin Y."/>
            <person name="Miyamoto A."/>
            <person name="Hattori A."/>
            <person name="Wu Q."/>
            <person name="Nakagawa T."/>
            <person name="Nakano M."/>
            <person name="Teshigawara K."/>
            <person name="Mawatari K."/>
            <person name="Hosaka T."/>
            <person name="Takahashi A."/>
            <person name="Nakaya Y."/>
        </authorList>
    </citation>
    <scope>NUCLEOTIDE SEQUENCE [MRNA] (ISOFORMS SREBP-1ADELTA AND SREBP-1CDELTA)</scope>
    <scope>SUBCELLULAR LOCATION (ISOFORMS SREBP-1ADELTA AND SREBP-1CDELTA)</scope>
    <scope>FUNCTION (ISOFORMS SREBP-1ADELTA AND SREBP-1CDELTA)</scope>
    <source>
        <tissue>Liver</tissue>
    </source>
</reference>
<reference key="4">
    <citation type="journal article" date="2006" name="Nature">
        <title>DNA sequence of human chromosome 17 and analysis of rearrangement in the human lineage.</title>
        <authorList>
            <person name="Zody M.C."/>
            <person name="Garber M."/>
            <person name="Adams D.J."/>
            <person name="Sharpe T."/>
            <person name="Harrow J."/>
            <person name="Lupski J.R."/>
            <person name="Nicholson C."/>
            <person name="Searle S.M."/>
            <person name="Wilming L."/>
            <person name="Young S.K."/>
            <person name="Abouelleil A."/>
            <person name="Allen N.R."/>
            <person name="Bi W."/>
            <person name="Bloom T."/>
            <person name="Borowsky M.L."/>
            <person name="Bugalter B.E."/>
            <person name="Butler J."/>
            <person name="Chang J.L."/>
            <person name="Chen C.-K."/>
            <person name="Cook A."/>
            <person name="Corum B."/>
            <person name="Cuomo C.A."/>
            <person name="de Jong P.J."/>
            <person name="DeCaprio D."/>
            <person name="Dewar K."/>
            <person name="FitzGerald M."/>
            <person name="Gilbert J."/>
            <person name="Gibson R."/>
            <person name="Gnerre S."/>
            <person name="Goldstein S."/>
            <person name="Grafham D.V."/>
            <person name="Grocock R."/>
            <person name="Hafez N."/>
            <person name="Hagopian D.S."/>
            <person name="Hart E."/>
            <person name="Norman C.H."/>
            <person name="Humphray S."/>
            <person name="Jaffe D.B."/>
            <person name="Jones M."/>
            <person name="Kamal M."/>
            <person name="Khodiyar V.K."/>
            <person name="LaButti K."/>
            <person name="Laird G."/>
            <person name="Lehoczky J."/>
            <person name="Liu X."/>
            <person name="Lokyitsang T."/>
            <person name="Loveland J."/>
            <person name="Lui A."/>
            <person name="Macdonald P."/>
            <person name="Major J.E."/>
            <person name="Matthews L."/>
            <person name="Mauceli E."/>
            <person name="McCarroll S.A."/>
            <person name="Mihalev A.H."/>
            <person name="Mudge J."/>
            <person name="Nguyen C."/>
            <person name="Nicol R."/>
            <person name="O'Leary S.B."/>
            <person name="Osoegawa K."/>
            <person name="Schwartz D.C."/>
            <person name="Shaw-Smith C."/>
            <person name="Stankiewicz P."/>
            <person name="Steward C."/>
            <person name="Swarbreck D."/>
            <person name="Venkataraman V."/>
            <person name="Whittaker C.A."/>
            <person name="Yang X."/>
            <person name="Zimmer A.R."/>
            <person name="Bradley A."/>
            <person name="Hubbard T."/>
            <person name="Birren B.W."/>
            <person name="Rogers J."/>
            <person name="Lander E.S."/>
            <person name="Nusbaum C."/>
        </authorList>
    </citation>
    <scope>NUCLEOTIDE SEQUENCE [LARGE SCALE GENOMIC DNA]</scope>
</reference>
<reference key="5">
    <citation type="submission" date="2005-09" db="EMBL/GenBank/DDBJ databases">
        <authorList>
            <person name="Mural R.J."/>
            <person name="Istrail S."/>
            <person name="Sutton G.G."/>
            <person name="Florea L."/>
            <person name="Halpern A.L."/>
            <person name="Mobarry C.M."/>
            <person name="Lippert R."/>
            <person name="Walenz B."/>
            <person name="Shatkay H."/>
            <person name="Dew I."/>
            <person name="Miller J.R."/>
            <person name="Flanigan M.J."/>
            <person name="Edwards N.J."/>
            <person name="Bolanos R."/>
            <person name="Fasulo D."/>
            <person name="Halldorsson B.V."/>
            <person name="Hannenhalli S."/>
            <person name="Turner R."/>
            <person name="Yooseph S."/>
            <person name="Lu F."/>
            <person name="Nusskern D.R."/>
            <person name="Shue B.C."/>
            <person name="Zheng X.H."/>
            <person name="Zhong F."/>
            <person name="Delcher A.L."/>
            <person name="Huson D.H."/>
            <person name="Kravitz S.A."/>
            <person name="Mouchard L."/>
            <person name="Reinert K."/>
            <person name="Remington K.A."/>
            <person name="Clark A.G."/>
            <person name="Waterman M.S."/>
            <person name="Eichler E.E."/>
            <person name="Adams M.D."/>
            <person name="Hunkapiller M.W."/>
            <person name="Myers E.W."/>
            <person name="Venter J.C."/>
        </authorList>
    </citation>
    <scope>NUCLEOTIDE SEQUENCE [LARGE SCALE GENOMIC DNA] (ISOFORM SREBP-1A)</scope>
</reference>
<reference key="6">
    <citation type="journal article" date="2004" name="Genome Res.">
        <title>The status, quality, and expansion of the NIH full-length cDNA project: the Mammalian Gene Collection (MGC).</title>
        <authorList>
            <consortium name="The MGC Project Team"/>
        </authorList>
    </citation>
    <scope>NUCLEOTIDE SEQUENCE [LARGE SCALE MRNA] (ISOFORMS SREBP-1A AND 4)</scope>
    <scope>VARIANTS SER-306 AND LEU-834</scope>
    <source>
        <tissue>Brain</tissue>
        <tissue>Placenta</tissue>
        <tissue>Uterus</tissue>
    </source>
</reference>
<reference key="7">
    <citation type="submission" date="2005-03" db="EMBL/GenBank/DDBJ databases">
        <authorList>
            <person name="Totoki Y."/>
            <person name="Toyoda A."/>
            <person name="Takeda T."/>
            <person name="Sakaki Y."/>
            <person name="Tanaka A."/>
            <person name="Yokoyama S."/>
            <person name="Ohara O."/>
            <person name="Nagase T."/>
            <person name="Kikuno R.F."/>
        </authorList>
    </citation>
    <scope>NUCLEOTIDE SEQUENCE [LARGE SCALE MRNA] OF 31-1147 (ISOFORM SREBP-1A/4)</scope>
    <source>
        <tissue>Spleen</tissue>
    </source>
</reference>
<reference key="8">
    <citation type="journal article" date="2001" name="J. Biol. Chem.">
        <title>Direct demonstration of rapid degradation of nuclear sterol regulatory element-binding proteins by the ubiquitin-proteasome pathway.</title>
        <authorList>
            <person name="Hirano Y."/>
            <person name="Yoshida M."/>
            <person name="Shimizu M."/>
            <person name="Sato R."/>
        </authorList>
    </citation>
    <scope>SUBCELLULAR LOCATION</scope>
    <scope>UBIQUITINATION</scope>
</reference>
<reference key="9">
    <citation type="journal article" date="2002" name="Cell">
        <title>Crucial step in cholesterol homeostasis: sterols promote binding of SCAP to INSIG-1, a membrane protein that facilitates retention of SREBPs in ER.</title>
        <authorList>
            <person name="Yang T."/>
            <person name="Espenshade P.J."/>
            <person name="Wright M.E."/>
            <person name="Yabe D."/>
            <person name="Gong Y."/>
            <person name="Aebersold R."/>
            <person name="Goldstein J.L."/>
            <person name="Brown M.S."/>
        </authorList>
    </citation>
    <scope>SUBCELLULAR LOCATION</scope>
</reference>
<reference key="10">
    <citation type="journal article" date="1996" name="J. Biol. Chem.">
        <title>Regulated cleavage of sterol regulatory element binding proteins requires sequences on both sides of the endoplasmic reticulum membrane.</title>
        <authorList>
            <person name="Hua X."/>
            <person name="Sakai J."/>
            <person name="Brown M.S."/>
            <person name="Goldstein J.L."/>
        </authorList>
    </citation>
    <scope>FUNCTION</scope>
    <scope>MUTAGENESIS OF SER-455; ASP-456; SER-457; ASP-460; ASP-466; GLY-481; MET-482; LEU-483; ASP-484; 484-ASP--ARG-487; ARG-485 AND ARG-527</scope>
</reference>
<reference key="11">
    <citation type="journal article" date="2002" name="J. Lipid Res.">
        <title>Transcriptional activities of nuclear SREBP-1a, -1c, and -2 to different target promoters of lipogenic and cholesterogenic genes.</title>
        <authorList>
            <person name="Amemiya-Kudo M."/>
            <person name="Shimano H."/>
            <person name="Hasty A.H."/>
            <person name="Yahagi N."/>
            <person name="Yoshikawa T."/>
            <person name="Matsuzaka T."/>
            <person name="Okazaki H."/>
            <person name="Tamura Y."/>
            <person name="Iizuka Y."/>
            <person name="Ohashi K."/>
            <person name="Osuga J."/>
            <person name="Harada K."/>
            <person name="Gotoda T."/>
            <person name="Sato R."/>
            <person name="Kimura S."/>
            <person name="Ishibashi S."/>
            <person name="Yamada N."/>
        </authorList>
    </citation>
    <scope>FUNCTION</scope>
    <scope>MUTAGENESIS OF TYR-335</scope>
</reference>
<reference key="12">
    <citation type="journal article" date="2008" name="Proc. Natl. Acad. Sci. U.S.A.">
        <title>A quantitative atlas of mitotic phosphorylation.</title>
        <authorList>
            <person name="Dephoure N."/>
            <person name="Zhou C."/>
            <person name="Villen J."/>
            <person name="Beausoleil S.A."/>
            <person name="Bakalarski C.E."/>
            <person name="Elledge S.J."/>
            <person name="Gygi S.P."/>
        </authorList>
    </citation>
    <scope>PHOSPHORYLATION [LARGE SCALE ANALYSIS] AT SER-117</scope>
    <scope>IDENTIFICATION BY MASS SPECTROMETRY [LARGE SCALE ANALYSIS]</scope>
    <source>
        <tissue>Cervix carcinoma</tissue>
    </source>
</reference>
<reference key="13">
    <citation type="journal article" date="2013" name="J. Proteome Res.">
        <title>Toward a comprehensive characterization of a human cancer cell phosphoproteome.</title>
        <authorList>
            <person name="Zhou H."/>
            <person name="Di Palma S."/>
            <person name="Preisinger C."/>
            <person name="Peng M."/>
            <person name="Polat A.N."/>
            <person name="Heck A.J."/>
            <person name="Mohammed S."/>
        </authorList>
    </citation>
    <scope>PHOSPHORYLATION [LARGE SCALE ANALYSIS] AT SER-1060</scope>
    <scope>IDENTIFICATION BY MASS SPECTROMETRY [LARGE SCALE ANALYSIS]</scope>
    <source>
        <tissue>Cervix carcinoma</tissue>
        <tissue>Erythroleukemia</tissue>
    </source>
</reference>
<reference key="14">
    <citation type="journal article" date="2015" name="Nat. Commun.">
        <title>PAQR3 modulates cholesterol homeostasis by anchoring Scap/SREBP complex to the Golgi apparatus.</title>
        <authorList>
            <person name="Xu D."/>
            <person name="Wang Z."/>
            <person name="Zhang Y."/>
            <person name="Jiang W."/>
            <person name="Pan Y."/>
            <person name="Song B.L."/>
            <person name="Chen Y."/>
        </authorList>
    </citation>
    <scope>INTERACTION WITH PAQR3</scope>
    <scope>SUBCELLULAR LOCATION</scope>
</reference>
<reference key="15">
    <citation type="journal article" date="2017" name="Nat. Rev. Endocrinol.">
        <title>SREBP-regulated lipid metabolism: convergent physiology - divergent pathophysiology.</title>
        <authorList>
            <person name="Shimano H."/>
            <person name="Sato R."/>
        </authorList>
    </citation>
    <scope>REVIEW</scope>
</reference>
<reference key="16">
    <citation type="journal article" date="2020" name="Cell. Mol. Life Sci.">
        <title>The evolution of the 9aaTAD domain in Sp2 proteins: inactivation with valines and intron reservoirs.</title>
        <authorList>
            <person name="Piskacek M."/>
            <person name="Havelka M."/>
            <person name="Jendruchova K."/>
            <person name="Knight A."/>
            <person name="Keegan L.P."/>
        </authorList>
    </citation>
    <scope>9AATAD MOTIF</scope>
</reference>
<reference key="17">
    <citation type="journal article" date="2020" name="Am. J. Hum. Genet.">
        <title>Mutations in SREBF1, Encoding Sterol Regulatory Element Binding Transcription Factor 1, Cause Autosomal-Dominant IFAP Syndrome.</title>
        <authorList>
            <person name="Wang H."/>
            <person name="Humbatova A."/>
            <person name="Liu Y."/>
            <person name="Qin W."/>
            <person name="Lee M."/>
            <person name="Cesarato N."/>
            <person name="Kortuem F."/>
            <person name="Kumar S."/>
            <person name="Romano M.T."/>
            <person name="Dai S."/>
            <person name="Mo R."/>
            <person name="Sivalingam S."/>
            <person name="Motameny S."/>
            <person name="Wu Y."/>
            <person name="Wang X."/>
            <person name="Niu X."/>
            <person name="Geng S."/>
            <person name="Bornholdt D."/>
            <person name="Kroisel P.M."/>
            <person name="Tadini G."/>
            <person name="Walter S.D."/>
            <person name="Hauck F."/>
            <person name="Girisha K.M."/>
            <person name="Calza A.M."/>
            <person name="Bottani A."/>
            <person name="Altmueller J."/>
            <person name="Buness A."/>
            <person name="Yang S."/>
            <person name="Sun X."/>
            <person name="Ma L."/>
            <person name="Kutsche K."/>
            <person name="Grzeschik K.H."/>
            <person name="Betz R.C."/>
            <person name="Lin Z."/>
        </authorList>
    </citation>
    <scope>FUNCTION</scope>
    <scope>SUBCELLULAR LOCATION</scope>
    <scope>MUTAGENESIS OF ARG-527</scope>
    <scope>VARIANTS IFAP2 CYS-527; ASN-528 DEL AND PRO-530</scope>
    <scope>CHARACTERIZATION OF VARIANTS IFAP2 CYS-527; ASN-528 DEL AND PRO-530</scope>
</reference>
<reference key="18">
    <citation type="journal article" date="2020" name="Nature">
        <title>The gluconeogenic enzyme PCK1 phosphorylates INSIG1/2 for lipogenesis.</title>
        <authorList>
            <person name="Xu D."/>
            <person name="Wang Z."/>
            <person name="Xia Y."/>
            <person name="Shao F."/>
            <person name="Xia W."/>
            <person name="Wei Y."/>
            <person name="Li X."/>
            <person name="Qian X."/>
            <person name="Lee J.H."/>
            <person name="Du L."/>
            <person name="Zheng Y."/>
            <person name="Lv G."/>
            <person name="Leu J.S."/>
            <person name="Wang H."/>
            <person name="Xing D."/>
            <person name="Liang T."/>
            <person name="Hung M.C."/>
            <person name="Lu Z."/>
        </authorList>
    </citation>
    <scope>FUNCTION</scope>
    <scope>SUBCELLULAR LOCATION</scope>
    <scope>INTERACTION WITH SCAP</scope>
    <scope>PROTEOLYTIC CLEAVAGE</scope>
</reference>
<reference key="19">
    <citation type="journal article" date="2022" name="JCI Insight">
        <title>ARMC5-CUL3 E3 ligase targets full-length SREBF in adrenocortical tumors.</title>
        <authorList>
            <person name="Okuno Y."/>
            <person name="Fukuhara A."/>
            <person name="Otsuki M."/>
            <person name="Shimomura I."/>
        </authorList>
    </citation>
    <scope>UBIQUITINATION</scope>
</reference>
<reference key="20">
    <citation type="journal article" date="1998" name="Structure">
        <title>Co-crystal structure of sterol regulatory element binding protein 1a at 2.3-A resolution.</title>
        <authorList>
            <person name="Parraga A."/>
            <person name="Bellsolell L."/>
            <person name="Ferre-D'Amare A.R."/>
            <person name="Burley S.K."/>
        </authorList>
    </citation>
    <scope>X-RAY CRYSTALLOGRAPHY (2.3 ANGSTROMS) OF 319-394</scope>
</reference>
<reference key="21">
    <citation type="journal article" date="2020" name="Am. J. Med. Genet. A">
        <title>Exome sequencing identifies a SREBF1 recurrent ARG557CYS mutation as the cause of hereditary mucoepithelial dysplasia in a family with high clinical variability.</title>
        <authorList>
            <person name="Chacon-Camacho O.F."/>
            <person name="Arce-Gonzalez R."/>
            <person name="Ordaz-Robles T."/>
            <person name="Perezpena-Diazconti M."/>
            <person name="Nava-Castaneda A."/>
            <person name="Zenteno J.C."/>
        </authorList>
    </citation>
    <scope>VARIANT HMD CYS-527</scope>
</reference>
<reference key="22">
    <citation type="journal article" date="2020" name="J. Invest. Dermatol.">
        <title>Hereditary Mucoepithelial Dysplasia Results from Heterozygous Variants at p.Arg557 Mutational Hotspot in SREBF1, Encoding a Transcription Factor Involved in Cholesterol Homeostasis.</title>
        <authorList>
            <person name="Morice-Picard F."/>
            <person name="Michaud V."/>
            <person name="Lasseaux E."/>
            <person name="Rezvani H.R."/>
            <person name="Plaisant C."/>
            <person name="Bessis D."/>
            <person name="Leaute-Labreze C."/>
            <person name="Arveiler B."/>
            <person name="Taieb A."/>
            <person name="Trimouille A."/>
            <person name="Boralevi F."/>
        </authorList>
    </citation>
    <scope>VARIANTS HMD CYS-527 AND HIS-527</scope>
</reference>